<sequence>MFSDFLSLMFTAALMTLGLAVCSLLLGLFLSLIFAVLEANRFVGKPMTVFVALLRGLPEIIVVLLVYFGSTELVEMLTGEYIEFGAFGCGVLALSLIFAAYASQTLRGAIQAIPKGQWESGAALGLSKSYTFIHIVMPQVWRHALPGLSTQWLVLLKDTALVSLIGVDDLMHQADLINTNTHQPFTWYGIAALIYLAVTLISQVGIRKLELRFTRFERGVK</sequence>
<proteinExistence type="inferred from homology"/>
<accession>P45090</accession>
<name>ARTQ_HAEIN</name>
<keyword id="KW-0029">Amino-acid transport</keyword>
<keyword id="KW-0997">Cell inner membrane</keyword>
<keyword id="KW-1003">Cell membrane</keyword>
<keyword id="KW-0472">Membrane</keyword>
<keyword id="KW-1185">Reference proteome</keyword>
<keyword id="KW-0812">Transmembrane</keyword>
<keyword id="KW-1133">Transmembrane helix</keyword>
<keyword id="KW-0813">Transport</keyword>
<gene>
    <name type="primary">artQ</name>
    <name type="ordered locus">HI_1178</name>
</gene>
<evidence type="ECO:0000250" key="1"/>
<evidence type="ECO:0000255" key="2">
    <source>
        <dbReference type="PROSITE-ProRule" id="PRU00441"/>
    </source>
</evidence>
<evidence type="ECO:0000305" key="3"/>
<comment type="function">
    <text evidence="1">Part of the ABC transporter complex ArtPIQM involved in arginine transport. Probably responsible for the translocation of the substrate across the membrane (By similarity).</text>
</comment>
<comment type="subunit">
    <text evidence="1">The complex is composed of two ATP-binding proteins (ArtP), two transmembrane proteins (ArtM and ArtQ) and a solute-binding protein (ArtI).</text>
</comment>
<comment type="subcellular location">
    <subcellularLocation>
        <location evidence="3">Cell inner membrane</location>
        <topology evidence="2">Multi-pass membrane protein</topology>
    </subcellularLocation>
</comment>
<comment type="similarity">
    <text evidence="3">Belongs to the binding-protein-dependent transport system permease family. HisMQ subfamily.</text>
</comment>
<dbReference type="EMBL" id="L42023">
    <property type="protein sequence ID" value="AAC22829.1"/>
    <property type="molecule type" value="Genomic_DNA"/>
</dbReference>
<dbReference type="EMBL" id="U17295">
    <property type="protein sequence ID" value="AAA95979.1"/>
    <property type="molecule type" value="Genomic_DNA"/>
</dbReference>
<dbReference type="PIR" id="B64188">
    <property type="entry name" value="B64188"/>
</dbReference>
<dbReference type="RefSeq" id="NP_439334.1">
    <property type="nucleotide sequence ID" value="NC_000907.1"/>
</dbReference>
<dbReference type="SMR" id="P45090"/>
<dbReference type="STRING" id="71421.HI_1178"/>
<dbReference type="EnsemblBacteria" id="AAC22829">
    <property type="protein sequence ID" value="AAC22829"/>
    <property type="gene ID" value="HI_1178"/>
</dbReference>
<dbReference type="KEGG" id="hin:HI_1178"/>
<dbReference type="PATRIC" id="fig|71421.8.peg.1229"/>
<dbReference type="eggNOG" id="COG4215">
    <property type="taxonomic scope" value="Bacteria"/>
</dbReference>
<dbReference type="HOGENOM" id="CLU_019602_1_4_6"/>
<dbReference type="OrthoDB" id="9815029at2"/>
<dbReference type="PhylomeDB" id="P45090"/>
<dbReference type="BioCyc" id="HINF71421:G1GJ1-1210-MONOMER"/>
<dbReference type="Proteomes" id="UP000000579">
    <property type="component" value="Chromosome"/>
</dbReference>
<dbReference type="GO" id="GO:0043190">
    <property type="term" value="C:ATP-binding cassette (ABC) transporter complex"/>
    <property type="evidence" value="ECO:0007669"/>
    <property type="project" value="InterPro"/>
</dbReference>
<dbReference type="GO" id="GO:0005886">
    <property type="term" value="C:plasma membrane"/>
    <property type="evidence" value="ECO:0000318"/>
    <property type="project" value="GO_Central"/>
</dbReference>
<dbReference type="GO" id="GO:0022857">
    <property type="term" value="F:transmembrane transporter activity"/>
    <property type="evidence" value="ECO:0007669"/>
    <property type="project" value="InterPro"/>
</dbReference>
<dbReference type="GO" id="GO:0006865">
    <property type="term" value="P:amino acid transport"/>
    <property type="evidence" value="ECO:0007669"/>
    <property type="project" value="UniProtKB-KW"/>
</dbReference>
<dbReference type="CDD" id="cd06261">
    <property type="entry name" value="TM_PBP2"/>
    <property type="match status" value="1"/>
</dbReference>
<dbReference type="Gene3D" id="1.10.3720.10">
    <property type="entry name" value="MetI-like"/>
    <property type="match status" value="1"/>
</dbReference>
<dbReference type="InterPro" id="IPR010065">
    <property type="entry name" value="AA_ABC_transptr_permease_3TM"/>
</dbReference>
<dbReference type="InterPro" id="IPR051613">
    <property type="entry name" value="ABC_transp_permease_HisMQ"/>
</dbReference>
<dbReference type="InterPro" id="IPR000515">
    <property type="entry name" value="MetI-like"/>
</dbReference>
<dbReference type="InterPro" id="IPR035906">
    <property type="entry name" value="MetI-like_sf"/>
</dbReference>
<dbReference type="NCBIfam" id="TIGR01726">
    <property type="entry name" value="HEQRo_perm_3TM"/>
    <property type="match status" value="1"/>
</dbReference>
<dbReference type="NCBIfam" id="NF008337">
    <property type="entry name" value="PRK11123.1"/>
    <property type="match status" value="1"/>
</dbReference>
<dbReference type="PANTHER" id="PTHR30133:SF2">
    <property type="entry name" value="ARGININE ABC TRANSPORTER PERMEASE PROTEIN ARTQ"/>
    <property type="match status" value="1"/>
</dbReference>
<dbReference type="PANTHER" id="PTHR30133">
    <property type="entry name" value="CATIONIC AMINO ACID TRANSPORTER, MEMBRANE COMPONENT"/>
    <property type="match status" value="1"/>
</dbReference>
<dbReference type="Pfam" id="PF00528">
    <property type="entry name" value="BPD_transp_1"/>
    <property type="match status" value="1"/>
</dbReference>
<dbReference type="SUPFAM" id="SSF161098">
    <property type="entry name" value="MetI-like"/>
    <property type="match status" value="1"/>
</dbReference>
<dbReference type="PROSITE" id="PS50928">
    <property type="entry name" value="ABC_TM1"/>
    <property type="match status" value="1"/>
</dbReference>
<feature type="chain" id="PRO_0000059965" description="Arginine ABC transporter permease protein ArtQ">
    <location>
        <begin position="1"/>
        <end position="221"/>
    </location>
</feature>
<feature type="transmembrane region" description="Helical" evidence="2">
    <location>
        <begin position="17"/>
        <end position="37"/>
    </location>
</feature>
<feature type="transmembrane region" description="Helical" evidence="2">
    <location>
        <begin position="49"/>
        <end position="69"/>
    </location>
</feature>
<feature type="transmembrane region" description="Helical" evidence="2">
    <location>
        <begin position="82"/>
        <end position="102"/>
    </location>
</feature>
<feature type="transmembrane region" description="Helical" evidence="2">
    <location>
        <begin position="121"/>
        <end position="141"/>
    </location>
</feature>
<feature type="transmembrane region" description="Helical" evidence="2">
    <location>
        <begin position="186"/>
        <end position="206"/>
    </location>
</feature>
<feature type="domain" description="ABC transmembrane type-1" evidence="2">
    <location>
        <begin position="13"/>
        <end position="206"/>
    </location>
</feature>
<protein>
    <recommendedName>
        <fullName>Arginine ABC transporter permease protein ArtQ</fullName>
    </recommendedName>
</protein>
<reference key="1">
    <citation type="journal article" date="1995" name="Science">
        <title>Whole-genome random sequencing and assembly of Haemophilus influenzae Rd.</title>
        <authorList>
            <person name="Fleischmann R.D."/>
            <person name="Adams M.D."/>
            <person name="White O."/>
            <person name="Clayton R.A."/>
            <person name="Kirkness E.F."/>
            <person name="Kerlavage A.R."/>
            <person name="Bult C.J."/>
            <person name="Tomb J.-F."/>
            <person name="Dougherty B.A."/>
            <person name="Merrick J.M."/>
            <person name="McKenney K."/>
            <person name="Sutton G.G."/>
            <person name="FitzHugh W."/>
            <person name="Fields C.A."/>
            <person name="Gocayne J.D."/>
            <person name="Scott J.D."/>
            <person name="Shirley R."/>
            <person name="Liu L.-I."/>
            <person name="Glodek A."/>
            <person name="Kelley J.M."/>
            <person name="Weidman J.F."/>
            <person name="Phillips C.A."/>
            <person name="Spriggs T."/>
            <person name="Hedblom E."/>
            <person name="Cotton M.D."/>
            <person name="Utterback T.R."/>
            <person name="Hanna M.C."/>
            <person name="Nguyen D.T."/>
            <person name="Saudek D.M."/>
            <person name="Brandon R.C."/>
            <person name="Fine L.D."/>
            <person name="Fritchman J.L."/>
            <person name="Fuhrmann J.L."/>
            <person name="Geoghagen N.S.M."/>
            <person name="Gnehm C.L."/>
            <person name="McDonald L.A."/>
            <person name="Small K.V."/>
            <person name="Fraser C.M."/>
            <person name="Smith H.O."/>
            <person name="Venter J.C."/>
        </authorList>
    </citation>
    <scope>NUCLEOTIDE SEQUENCE [LARGE SCALE GENOMIC DNA]</scope>
    <source>
        <strain>ATCC 51907 / DSM 11121 / KW20 / Rd</strain>
    </source>
</reference>
<reference key="2">
    <citation type="journal article" date="1996" name="J. Bacteriol.">
        <title>Altered lipopolysaccharide characteristic of the I69 phenotype in Haemophilus influenzae results from mutations in a novel gene, isn.</title>
        <authorList>
            <person name="Preston A."/>
            <person name="Maskell D."/>
            <person name="Johnson A."/>
            <person name="Moxon E.R."/>
        </authorList>
    </citation>
    <scope>NUCLEOTIDE SEQUENCE [GENOMIC DNA]</scope>
    <source>
        <strain>ATCC 51907 / DSM 11121 / KW20 / Rd</strain>
    </source>
</reference>
<organism>
    <name type="scientific">Haemophilus influenzae (strain ATCC 51907 / DSM 11121 / KW20 / Rd)</name>
    <dbReference type="NCBI Taxonomy" id="71421"/>
    <lineage>
        <taxon>Bacteria</taxon>
        <taxon>Pseudomonadati</taxon>
        <taxon>Pseudomonadota</taxon>
        <taxon>Gammaproteobacteria</taxon>
        <taxon>Pasteurellales</taxon>
        <taxon>Pasteurellaceae</taxon>
        <taxon>Haemophilus</taxon>
    </lineage>
</organism>